<feature type="initiator methionine" description="Removed" evidence="2">
    <location>
        <position position="1"/>
    </location>
</feature>
<feature type="chain" id="PRO_0000449038" description="Flagellin">
    <location>
        <begin position="2"/>
        <end position="548"/>
    </location>
</feature>
<feature type="helix" evidence="4">
    <location>
        <begin position="9"/>
        <end position="34"/>
    </location>
</feature>
<feature type="strand" evidence="4">
    <location>
        <begin position="35"/>
        <end position="37"/>
    </location>
</feature>
<feature type="turn" evidence="4">
    <location>
        <begin position="41"/>
        <end position="43"/>
    </location>
</feature>
<feature type="strand" evidence="4">
    <location>
        <begin position="44"/>
        <end position="46"/>
    </location>
</feature>
<feature type="helix" evidence="4">
    <location>
        <begin position="47"/>
        <end position="99"/>
    </location>
</feature>
<feature type="strand" evidence="4">
    <location>
        <begin position="101"/>
        <end position="104"/>
    </location>
</feature>
<feature type="helix" evidence="4">
    <location>
        <begin position="106"/>
        <end position="128"/>
    </location>
</feature>
<feature type="strand" evidence="4">
    <location>
        <begin position="135"/>
        <end position="139"/>
    </location>
</feature>
<feature type="strand" evidence="4">
    <location>
        <begin position="144"/>
        <end position="146"/>
    </location>
</feature>
<feature type="strand" evidence="4">
    <location>
        <begin position="149"/>
        <end position="151"/>
    </location>
</feature>
<feature type="strand" evidence="4">
    <location>
        <begin position="156"/>
        <end position="158"/>
    </location>
</feature>
<feature type="helix" evidence="4">
    <location>
        <begin position="165"/>
        <end position="168"/>
    </location>
</feature>
<feature type="strand" evidence="4">
    <location>
        <begin position="169"/>
        <end position="172"/>
    </location>
</feature>
<feature type="helix" evidence="4">
    <location>
        <begin position="460"/>
        <end position="507"/>
    </location>
</feature>
<feature type="helix" evidence="4">
    <location>
        <begin position="511"/>
        <end position="535"/>
    </location>
</feature>
<feature type="helix" evidence="4">
    <location>
        <begin position="541"/>
        <end position="545"/>
    </location>
</feature>
<proteinExistence type="evidence at protein level"/>
<sequence>MAQVINTNSLSLITQNNINKNQSALSSSIERLSSGLRINSAKDDAAGQAIANRFTSNIKGLTQAARNANDGISVAQTTEGALSEINNNLQRIRELTVQASTGTNSDSDLDSIQDEIKSRLDEIDRVSGQTQFNGVNVLAKDGSMKIQVGANDGQTITIDLKKIDSDTLGLNGFNVNGKGETANTAATLKDMSGFTAAAAPGGTVGVTQYTDKSAVASSVDILNAVAGADGNKVTTSADVGFGTPAAAVTYTYNKDTNSYSAASDDISSANLAAFLNPQARDTTKATVTIGGKDQDVNIDKSGNLTAADDGAVLYMDATGNLTKNNAGGDTQATLAKVATATGAKAATIQTDKGTFTSDGTAFDGASMSIDANTFANAVKNDTYTATVGAKTYSVTTGSAAADTAYMSNGVLSDTPPTYYAQADGSITTTEDAAAGKLVYKGSDGKLTTDTTSKAESTSDPLAALDDAISQIDKFRSSLGAVQNRLDSAVTNLNNTTTNLSEAQSRIQDADYATEVSNMSKAQIIQQAGNSVLAKANQVPQQVLSLLQG</sequence>
<evidence type="ECO:0000255" key="1"/>
<evidence type="ECO:0000269" key="2">
    <source>
    </source>
</evidence>
<evidence type="ECO:0000305" key="3"/>
<evidence type="ECO:0007829" key="4">
    <source>
        <dbReference type="PDB" id="8CVI"/>
    </source>
</evidence>
<name>FLIC_ECO27</name>
<dbReference type="EMBL" id="FM180568">
    <property type="protein sequence ID" value="CAS09589.1"/>
    <property type="molecule type" value="Genomic_DNA"/>
</dbReference>
<dbReference type="RefSeq" id="WP_000079695.1">
    <property type="nucleotide sequence ID" value="NC_011601.1"/>
</dbReference>
<dbReference type="PDB" id="7SN7">
    <property type="method" value="EM"/>
    <property type="resolution" value="4.20 A"/>
    <property type="chains" value="A/B/C/D/E/F/G/H/I/J/K/L/M/N/O/a/b/c/d/e/f/g/h=3-548"/>
</dbReference>
<dbReference type="PDB" id="7SQJ">
    <property type="method" value="EM"/>
    <property type="resolution" value="6.30 A"/>
    <property type="chains" value="A/B=1-548"/>
</dbReference>
<dbReference type="PDB" id="8CVI">
    <property type="method" value="EM"/>
    <property type="resolution" value="3.40 A"/>
    <property type="chains" value="A/B/C/D/E/F/G/H/I/J/K/L/M/N/O/P/Q/R/S/T/U/V/W/X/Y/Z/a/b/c/d=1-548"/>
</dbReference>
<dbReference type="PDB" id="8CYE">
    <property type="method" value="EM"/>
    <property type="resolution" value="3.90 A"/>
    <property type="chains" value="A/B/C/D/E/F/G/H/I/J/K/L/M/N/O/P/Q/R/S/T/U/V=1-548"/>
</dbReference>
<dbReference type="PDBsum" id="7SN7"/>
<dbReference type="PDBsum" id="7SQJ"/>
<dbReference type="PDBsum" id="8CVI"/>
<dbReference type="PDBsum" id="8CYE"/>
<dbReference type="EMDB" id="EMD-25386"/>
<dbReference type="EMDB" id="EMD-27008"/>
<dbReference type="EMDB" id="EMD-27076"/>
<dbReference type="SMR" id="B7USU2"/>
<dbReference type="KEGG" id="ecg:E2348C_2041"/>
<dbReference type="HOGENOM" id="CLU_011142_7_2_6"/>
<dbReference type="Proteomes" id="UP000008205">
    <property type="component" value="Chromosome"/>
</dbReference>
<dbReference type="GO" id="GO:0009288">
    <property type="term" value="C:bacterial-type flagellum"/>
    <property type="evidence" value="ECO:0007669"/>
    <property type="project" value="UniProtKB-SubCell"/>
</dbReference>
<dbReference type="GO" id="GO:0005576">
    <property type="term" value="C:extracellular region"/>
    <property type="evidence" value="ECO:0007669"/>
    <property type="project" value="UniProtKB-SubCell"/>
</dbReference>
<dbReference type="GO" id="GO:0005198">
    <property type="term" value="F:structural molecule activity"/>
    <property type="evidence" value="ECO:0007669"/>
    <property type="project" value="InterPro"/>
</dbReference>
<dbReference type="FunFam" id="1.20.1330.10:FF:000004">
    <property type="entry name" value="Flagellin"/>
    <property type="match status" value="1"/>
</dbReference>
<dbReference type="Gene3D" id="6.10.280.190">
    <property type="match status" value="1"/>
</dbReference>
<dbReference type="Gene3D" id="2.30.220.10">
    <property type="entry name" value="f41 fragment of flagellin, C-terminal domain"/>
    <property type="match status" value="1"/>
</dbReference>
<dbReference type="Gene3D" id="2.170.280.10">
    <property type="entry name" value="f41 fragment of flagellin, middle domain"/>
    <property type="match status" value="1"/>
</dbReference>
<dbReference type="Gene3D" id="1.20.1330.10">
    <property type="entry name" value="f41 fragment of flagellin, N-terminal domain"/>
    <property type="match status" value="1"/>
</dbReference>
<dbReference type="Gene3D" id="6.10.10.10">
    <property type="entry name" value="Flagellar export chaperone, C-terminal domain"/>
    <property type="match status" value="1"/>
</dbReference>
<dbReference type="InterPro" id="IPR001492">
    <property type="entry name" value="Flagellin"/>
</dbReference>
<dbReference type="InterPro" id="IPR046358">
    <property type="entry name" value="Flagellin_C"/>
</dbReference>
<dbReference type="InterPro" id="IPR042187">
    <property type="entry name" value="Flagellin_C_sub2"/>
</dbReference>
<dbReference type="InterPro" id="IPR001029">
    <property type="entry name" value="Flagellin_N"/>
</dbReference>
<dbReference type="InterPro" id="IPR032826">
    <property type="entry name" value="FliC_H7"/>
</dbReference>
<dbReference type="PANTHER" id="PTHR42792">
    <property type="entry name" value="FLAGELLIN"/>
    <property type="match status" value="1"/>
</dbReference>
<dbReference type="PANTHER" id="PTHR42792:SF2">
    <property type="entry name" value="FLAGELLIN"/>
    <property type="match status" value="1"/>
</dbReference>
<dbReference type="Pfam" id="PF00700">
    <property type="entry name" value="Flagellin_C"/>
    <property type="match status" value="1"/>
</dbReference>
<dbReference type="Pfam" id="PF00669">
    <property type="entry name" value="Flagellin_N"/>
    <property type="match status" value="1"/>
</dbReference>
<dbReference type="Pfam" id="PF12445">
    <property type="entry name" value="FliC"/>
    <property type="match status" value="1"/>
</dbReference>
<dbReference type="PRINTS" id="PR00207">
    <property type="entry name" value="FLAGELLIN"/>
</dbReference>
<dbReference type="SUPFAM" id="SSF64518">
    <property type="entry name" value="Phase 1 flagellin"/>
    <property type="match status" value="1"/>
</dbReference>
<gene>
    <name type="primary">fliC</name>
    <name type="ordered locus">E2348C_2041</name>
</gene>
<keyword id="KW-0002">3D-structure</keyword>
<keyword id="KW-0975">Bacterial flagellum</keyword>
<keyword id="KW-0903">Direct protein sequencing</keyword>
<keyword id="KW-1185">Reference proteome</keyword>
<keyword id="KW-0964">Secreted</keyword>
<comment type="function">
    <text evidence="3">Flagellin is the subunit protein which polymerizes to form the filaments of bacterial flagella.</text>
</comment>
<comment type="subcellular location">
    <subcellularLocation>
        <location evidence="1">Secreted</location>
    </subcellularLocation>
    <subcellularLocation>
        <location evidence="1">Bacterial flagellum</location>
    </subcellularLocation>
</comment>
<comment type="similarity">
    <text evidence="1">Belongs to the bacterial flagellin family.</text>
</comment>
<organism>
    <name type="scientific">Escherichia coli O127:H6 (strain E2348/69 / EPEC)</name>
    <dbReference type="NCBI Taxonomy" id="574521"/>
    <lineage>
        <taxon>Bacteria</taxon>
        <taxon>Pseudomonadati</taxon>
        <taxon>Pseudomonadota</taxon>
        <taxon>Gammaproteobacteria</taxon>
        <taxon>Enterobacterales</taxon>
        <taxon>Enterobacteriaceae</taxon>
        <taxon>Escherichia</taxon>
    </lineage>
</organism>
<protein>
    <recommendedName>
        <fullName>Flagellin</fullName>
    </recommendedName>
</protein>
<accession>B7USU2</accession>
<reference key="1">
    <citation type="journal article" date="2009" name="J. Bacteriol.">
        <title>Complete genome sequence and comparative genome analysis of enteropathogenic Escherichia coli O127:H6 strain E2348/69.</title>
        <authorList>
            <person name="Iguchi A."/>
            <person name="Thomson N.R."/>
            <person name="Ogura Y."/>
            <person name="Saunders D."/>
            <person name="Ooka T."/>
            <person name="Henderson I.R."/>
            <person name="Harris D."/>
            <person name="Asadulghani M."/>
            <person name="Kurokawa K."/>
            <person name="Dean P."/>
            <person name="Kenny B."/>
            <person name="Quail M.A."/>
            <person name="Thurston S."/>
            <person name="Dougan G."/>
            <person name="Hayashi T."/>
            <person name="Parkhill J."/>
            <person name="Frankel G."/>
        </authorList>
    </citation>
    <scope>NUCLEOTIDE SEQUENCE [LARGE SCALE GENOMIC DNA]</scope>
    <source>
        <strain>E2348/69 / EPEC</strain>
    </source>
</reference>
<reference key="2">
    <citation type="journal article" date="1998" name="Mol. Microbiol.">
        <title>BipA: a tyrosine-phosphorylated GTPase that mediates interactions between enteropathogenic Escherichia coli (EPEC) and epithelial cells.</title>
        <authorList>
            <person name="Farris M."/>
            <person name="Grant A."/>
            <person name="Richardson T.B."/>
            <person name="O'Connor C.D."/>
        </authorList>
    </citation>
    <scope>PROTEIN SEQUENCE OF 2-20</scope>
    <source>
        <strain>E2348/69 / EPEC</strain>
    </source>
</reference>